<proteinExistence type="inferred from homology"/>
<comment type="function">
    <text evidence="1">Catalyzes the formation of S-adenosylmethionine (AdoMet) from methionine and ATP. The overall synthetic reaction is composed of two sequential steps, AdoMet formation and the subsequent tripolyphosphate hydrolysis which occurs prior to release of AdoMet from the enzyme.</text>
</comment>
<comment type="catalytic activity">
    <reaction evidence="1">
        <text>L-methionine + ATP + H2O = S-adenosyl-L-methionine + phosphate + diphosphate</text>
        <dbReference type="Rhea" id="RHEA:21080"/>
        <dbReference type="ChEBI" id="CHEBI:15377"/>
        <dbReference type="ChEBI" id="CHEBI:30616"/>
        <dbReference type="ChEBI" id="CHEBI:33019"/>
        <dbReference type="ChEBI" id="CHEBI:43474"/>
        <dbReference type="ChEBI" id="CHEBI:57844"/>
        <dbReference type="ChEBI" id="CHEBI:59789"/>
        <dbReference type="EC" id="2.5.1.6"/>
    </reaction>
</comment>
<comment type="cofactor">
    <cofactor evidence="1">
        <name>Mg(2+)</name>
        <dbReference type="ChEBI" id="CHEBI:18420"/>
    </cofactor>
    <text evidence="1">Binds 2 divalent ions per subunit.</text>
</comment>
<comment type="cofactor">
    <cofactor evidence="1">
        <name>K(+)</name>
        <dbReference type="ChEBI" id="CHEBI:29103"/>
    </cofactor>
    <text evidence="1">Binds 1 potassium ion per subunit.</text>
</comment>
<comment type="pathway">
    <text evidence="1">Amino-acid biosynthesis; S-adenosyl-L-methionine biosynthesis; S-adenosyl-L-methionine from L-methionine: step 1/1.</text>
</comment>
<comment type="subunit">
    <text evidence="1">Homotetramer; dimer of dimers.</text>
</comment>
<comment type="subcellular location">
    <subcellularLocation>
        <location evidence="1">Cytoplasm</location>
    </subcellularLocation>
</comment>
<comment type="similarity">
    <text evidence="1">Belongs to the AdoMet synthase family.</text>
</comment>
<organism>
    <name type="scientific">Salmonella newport (strain SL254)</name>
    <dbReference type="NCBI Taxonomy" id="423368"/>
    <lineage>
        <taxon>Bacteria</taxon>
        <taxon>Pseudomonadati</taxon>
        <taxon>Pseudomonadota</taxon>
        <taxon>Gammaproteobacteria</taxon>
        <taxon>Enterobacterales</taxon>
        <taxon>Enterobacteriaceae</taxon>
        <taxon>Salmonella</taxon>
    </lineage>
</organism>
<dbReference type="EC" id="2.5.1.6" evidence="1"/>
<dbReference type="EMBL" id="CP001113">
    <property type="protein sequence ID" value="ACF62817.1"/>
    <property type="molecule type" value="Genomic_DNA"/>
</dbReference>
<dbReference type="RefSeq" id="WP_001062140.1">
    <property type="nucleotide sequence ID" value="NZ_CCMR01000001.1"/>
</dbReference>
<dbReference type="SMR" id="B4T5J6"/>
<dbReference type="KEGG" id="see:SNSL254_A3336"/>
<dbReference type="HOGENOM" id="CLU_041802_1_1_6"/>
<dbReference type="UniPathway" id="UPA00315">
    <property type="reaction ID" value="UER00080"/>
</dbReference>
<dbReference type="Proteomes" id="UP000008824">
    <property type="component" value="Chromosome"/>
</dbReference>
<dbReference type="GO" id="GO:0005737">
    <property type="term" value="C:cytoplasm"/>
    <property type="evidence" value="ECO:0007669"/>
    <property type="project" value="UniProtKB-SubCell"/>
</dbReference>
<dbReference type="GO" id="GO:0005524">
    <property type="term" value="F:ATP binding"/>
    <property type="evidence" value="ECO:0007669"/>
    <property type="project" value="UniProtKB-UniRule"/>
</dbReference>
<dbReference type="GO" id="GO:0000287">
    <property type="term" value="F:magnesium ion binding"/>
    <property type="evidence" value="ECO:0007669"/>
    <property type="project" value="UniProtKB-UniRule"/>
</dbReference>
<dbReference type="GO" id="GO:0004478">
    <property type="term" value="F:methionine adenosyltransferase activity"/>
    <property type="evidence" value="ECO:0007669"/>
    <property type="project" value="UniProtKB-UniRule"/>
</dbReference>
<dbReference type="GO" id="GO:0006730">
    <property type="term" value="P:one-carbon metabolic process"/>
    <property type="evidence" value="ECO:0007669"/>
    <property type="project" value="UniProtKB-KW"/>
</dbReference>
<dbReference type="GO" id="GO:0006556">
    <property type="term" value="P:S-adenosylmethionine biosynthetic process"/>
    <property type="evidence" value="ECO:0007669"/>
    <property type="project" value="UniProtKB-UniRule"/>
</dbReference>
<dbReference type="CDD" id="cd18079">
    <property type="entry name" value="S-AdoMet_synt"/>
    <property type="match status" value="1"/>
</dbReference>
<dbReference type="FunFam" id="3.30.300.10:FF:000001">
    <property type="entry name" value="S-adenosylmethionine synthase"/>
    <property type="match status" value="1"/>
</dbReference>
<dbReference type="FunFam" id="3.30.300.10:FF:000003">
    <property type="entry name" value="S-adenosylmethionine synthase"/>
    <property type="match status" value="1"/>
</dbReference>
<dbReference type="Gene3D" id="3.30.300.10">
    <property type="match status" value="3"/>
</dbReference>
<dbReference type="HAMAP" id="MF_00086">
    <property type="entry name" value="S_AdoMet_synth1"/>
    <property type="match status" value="1"/>
</dbReference>
<dbReference type="InterPro" id="IPR022631">
    <property type="entry name" value="ADOMET_SYNTHASE_CS"/>
</dbReference>
<dbReference type="InterPro" id="IPR022630">
    <property type="entry name" value="S-AdoMet_synt_C"/>
</dbReference>
<dbReference type="InterPro" id="IPR022629">
    <property type="entry name" value="S-AdoMet_synt_central"/>
</dbReference>
<dbReference type="InterPro" id="IPR022628">
    <property type="entry name" value="S-AdoMet_synt_N"/>
</dbReference>
<dbReference type="InterPro" id="IPR002133">
    <property type="entry name" value="S-AdoMet_synthetase"/>
</dbReference>
<dbReference type="InterPro" id="IPR022636">
    <property type="entry name" value="S-AdoMet_synthetase_sfam"/>
</dbReference>
<dbReference type="NCBIfam" id="TIGR01034">
    <property type="entry name" value="metK"/>
    <property type="match status" value="1"/>
</dbReference>
<dbReference type="PANTHER" id="PTHR11964">
    <property type="entry name" value="S-ADENOSYLMETHIONINE SYNTHETASE"/>
    <property type="match status" value="1"/>
</dbReference>
<dbReference type="Pfam" id="PF02773">
    <property type="entry name" value="S-AdoMet_synt_C"/>
    <property type="match status" value="1"/>
</dbReference>
<dbReference type="Pfam" id="PF02772">
    <property type="entry name" value="S-AdoMet_synt_M"/>
    <property type="match status" value="1"/>
</dbReference>
<dbReference type="Pfam" id="PF00438">
    <property type="entry name" value="S-AdoMet_synt_N"/>
    <property type="match status" value="1"/>
</dbReference>
<dbReference type="PIRSF" id="PIRSF000497">
    <property type="entry name" value="MAT"/>
    <property type="match status" value="1"/>
</dbReference>
<dbReference type="SUPFAM" id="SSF55973">
    <property type="entry name" value="S-adenosylmethionine synthetase"/>
    <property type="match status" value="3"/>
</dbReference>
<dbReference type="PROSITE" id="PS00376">
    <property type="entry name" value="ADOMET_SYNTHASE_1"/>
    <property type="match status" value="1"/>
</dbReference>
<dbReference type="PROSITE" id="PS00377">
    <property type="entry name" value="ADOMET_SYNTHASE_2"/>
    <property type="match status" value="1"/>
</dbReference>
<accession>B4T5J6</accession>
<keyword id="KW-0067">ATP-binding</keyword>
<keyword id="KW-0963">Cytoplasm</keyword>
<keyword id="KW-0460">Magnesium</keyword>
<keyword id="KW-0479">Metal-binding</keyword>
<keyword id="KW-0547">Nucleotide-binding</keyword>
<keyword id="KW-0554">One-carbon metabolism</keyword>
<keyword id="KW-0630">Potassium</keyword>
<keyword id="KW-0808">Transferase</keyword>
<evidence type="ECO:0000255" key="1">
    <source>
        <dbReference type="HAMAP-Rule" id="MF_00086"/>
    </source>
</evidence>
<protein>
    <recommendedName>
        <fullName evidence="1">S-adenosylmethionine synthase</fullName>
        <shortName evidence="1">AdoMet synthase</shortName>
        <ecNumber evidence="1">2.5.1.6</ecNumber>
    </recommendedName>
    <alternativeName>
        <fullName evidence="1">MAT</fullName>
    </alternativeName>
    <alternativeName>
        <fullName evidence="1">Methionine adenosyltransferase</fullName>
    </alternativeName>
</protein>
<sequence length="384" mass="41953">MAKHLFTSESVSEGHPDKIADQISDAVLDAILQQDPKARVACETYVKTGMVLVGGEITTSAWVDIEEITRNTVREIGYVHSDMGFDANSCAVLSAIGKQSPDINQGVDRADPLEQGAGDQGLMFGYATNETDVLMPAPITYAHRLVQRQAEVRKNGTLPWLRPDAKSQVTFQYDDGKIVGIDAVVLSTQHAEDIDQKSLQEAVMEEIIKPILPSEWLNTSTKFFINPTGRFVIGGPMGDCGLTGRKIIVDTYGGMARHGGGAFSGKDPSKVDRSAAYAARYVAKNIVAAGLADRCEIQVSYAIGVAEPTSIMVETFGTEKVPAEQLILLVREFFDLRPYGLIQMLDLLHPIYKETAAYGHFGRENFPWEKTDKAQLLRDAAGLK</sequence>
<feature type="chain" id="PRO_1000093082" description="S-adenosylmethionine synthase">
    <location>
        <begin position="1"/>
        <end position="384"/>
    </location>
</feature>
<feature type="region of interest" description="Flexible loop" evidence="1">
    <location>
        <begin position="99"/>
        <end position="109"/>
    </location>
</feature>
<feature type="binding site" description="in other chain" evidence="1">
    <location>
        <position position="15"/>
    </location>
    <ligand>
        <name>ATP</name>
        <dbReference type="ChEBI" id="CHEBI:30616"/>
        <note>ligand shared between two neighboring subunits</note>
    </ligand>
</feature>
<feature type="binding site" evidence="1">
    <location>
        <position position="17"/>
    </location>
    <ligand>
        <name>Mg(2+)</name>
        <dbReference type="ChEBI" id="CHEBI:18420"/>
    </ligand>
</feature>
<feature type="binding site" evidence="1">
    <location>
        <position position="43"/>
    </location>
    <ligand>
        <name>K(+)</name>
        <dbReference type="ChEBI" id="CHEBI:29103"/>
    </ligand>
</feature>
<feature type="binding site" description="in other chain" evidence="1">
    <location>
        <position position="56"/>
    </location>
    <ligand>
        <name>L-methionine</name>
        <dbReference type="ChEBI" id="CHEBI:57844"/>
        <note>ligand shared between two neighboring subunits</note>
    </ligand>
</feature>
<feature type="binding site" description="in other chain" evidence="1">
    <location>
        <position position="99"/>
    </location>
    <ligand>
        <name>L-methionine</name>
        <dbReference type="ChEBI" id="CHEBI:57844"/>
        <note>ligand shared between two neighboring subunits</note>
    </ligand>
</feature>
<feature type="binding site" description="in other chain" evidence="1">
    <location>
        <begin position="164"/>
        <end position="166"/>
    </location>
    <ligand>
        <name>ATP</name>
        <dbReference type="ChEBI" id="CHEBI:30616"/>
        <note>ligand shared between two neighboring subunits</note>
    </ligand>
</feature>
<feature type="binding site" description="in other chain" evidence="1">
    <location>
        <begin position="230"/>
        <end position="231"/>
    </location>
    <ligand>
        <name>ATP</name>
        <dbReference type="ChEBI" id="CHEBI:30616"/>
        <note>ligand shared between two neighboring subunits</note>
    </ligand>
</feature>
<feature type="binding site" evidence="1">
    <location>
        <position position="239"/>
    </location>
    <ligand>
        <name>ATP</name>
        <dbReference type="ChEBI" id="CHEBI:30616"/>
        <note>ligand shared between two neighboring subunits</note>
    </ligand>
</feature>
<feature type="binding site" evidence="1">
    <location>
        <position position="239"/>
    </location>
    <ligand>
        <name>L-methionine</name>
        <dbReference type="ChEBI" id="CHEBI:57844"/>
        <note>ligand shared between two neighboring subunits</note>
    </ligand>
</feature>
<feature type="binding site" description="in other chain" evidence="1">
    <location>
        <begin position="245"/>
        <end position="246"/>
    </location>
    <ligand>
        <name>ATP</name>
        <dbReference type="ChEBI" id="CHEBI:30616"/>
        <note>ligand shared between two neighboring subunits</note>
    </ligand>
</feature>
<feature type="binding site" evidence="1">
    <location>
        <position position="262"/>
    </location>
    <ligand>
        <name>ATP</name>
        <dbReference type="ChEBI" id="CHEBI:30616"/>
        <note>ligand shared between two neighboring subunits</note>
    </ligand>
</feature>
<feature type="binding site" evidence="1">
    <location>
        <position position="266"/>
    </location>
    <ligand>
        <name>ATP</name>
        <dbReference type="ChEBI" id="CHEBI:30616"/>
        <note>ligand shared between two neighboring subunits</note>
    </ligand>
</feature>
<feature type="binding site" description="in other chain" evidence="1">
    <location>
        <position position="270"/>
    </location>
    <ligand>
        <name>L-methionine</name>
        <dbReference type="ChEBI" id="CHEBI:57844"/>
        <note>ligand shared between two neighboring subunits</note>
    </ligand>
</feature>
<name>METK_SALNS</name>
<reference key="1">
    <citation type="journal article" date="2011" name="J. Bacteriol.">
        <title>Comparative genomics of 28 Salmonella enterica isolates: evidence for CRISPR-mediated adaptive sublineage evolution.</title>
        <authorList>
            <person name="Fricke W.F."/>
            <person name="Mammel M.K."/>
            <person name="McDermott P.F."/>
            <person name="Tartera C."/>
            <person name="White D.G."/>
            <person name="Leclerc J.E."/>
            <person name="Ravel J."/>
            <person name="Cebula T.A."/>
        </authorList>
    </citation>
    <scope>NUCLEOTIDE SEQUENCE [LARGE SCALE GENOMIC DNA]</scope>
    <source>
        <strain>SL254</strain>
    </source>
</reference>
<gene>
    <name evidence="1" type="primary">metK</name>
    <name type="ordered locus">SNSL254_A3336</name>
</gene>